<reference key="1">
    <citation type="journal article" date="2006" name="J. Bacteriol.">
        <title>Complete genome sequence of the dehalorespiring bacterium Desulfitobacterium hafniense Y51 and comparison with Dehalococcoides ethenogenes 195.</title>
        <authorList>
            <person name="Nonaka H."/>
            <person name="Keresztes G."/>
            <person name="Shinoda Y."/>
            <person name="Ikenaga Y."/>
            <person name="Abe M."/>
            <person name="Naito K."/>
            <person name="Inatomi K."/>
            <person name="Furukawa K."/>
            <person name="Inui M."/>
            <person name="Yukawa H."/>
        </authorList>
    </citation>
    <scope>NUCLEOTIDE SEQUENCE [LARGE SCALE GENOMIC DNA]</scope>
    <source>
        <strain>Y51</strain>
    </source>
</reference>
<sequence>MIMGNLELFLIAVGLSMDAFAVAISKGLSMRRMSYKTALITGLFFGGFQALMPLIGFLLGTRFESYITAIDHWIAFILLSLIGLNMIKESRGPCEIIEDRFNLKDMIILSLATSIDALAVGITFAFLHVDIVPAVSMIGVTTFLFSFLGVKIGNVFGECYKARAELAGGVILILMGLKILLEHLGFLG</sequence>
<proteinExistence type="inferred from homology"/>
<name>MNTP_DESHY</name>
<evidence type="ECO:0000255" key="1">
    <source>
        <dbReference type="HAMAP-Rule" id="MF_01521"/>
    </source>
</evidence>
<comment type="function">
    <text evidence="1">Probably functions as a manganese efflux pump.</text>
</comment>
<comment type="subcellular location">
    <subcellularLocation>
        <location evidence="1">Cell membrane</location>
        <topology evidence="1">Multi-pass membrane protein</topology>
    </subcellularLocation>
</comment>
<comment type="similarity">
    <text evidence="1">Belongs to the MntP (TC 9.B.29) family.</text>
</comment>
<organism>
    <name type="scientific">Desulfitobacterium hafniense (strain Y51)</name>
    <dbReference type="NCBI Taxonomy" id="138119"/>
    <lineage>
        <taxon>Bacteria</taxon>
        <taxon>Bacillati</taxon>
        <taxon>Bacillota</taxon>
        <taxon>Clostridia</taxon>
        <taxon>Eubacteriales</taxon>
        <taxon>Desulfitobacteriaceae</taxon>
        <taxon>Desulfitobacterium</taxon>
    </lineage>
</organism>
<protein>
    <recommendedName>
        <fullName evidence="1">Putative manganese efflux pump MntP</fullName>
    </recommendedName>
</protein>
<accession>Q24Y92</accession>
<gene>
    <name evidence="1" type="primary">mntP</name>
    <name type="ordered locus">DSY1211</name>
</gene>
<feature type="chain" id="PRO_0000292533" description="Putative manganese efflux pump MntP">
    <location>
        <begin position="1"/>
        <end position="188"/>
    </location>
</feature>
<feature type="transmembrane region" description="Helical" evidence="1">
    <location>
        <begin position="2"/>
        <end position="22"/>
    </location>
</feature>
<feature type="transmembrane region" description="Helical" evidence="1">
    <location>
        <begin position="39"/>
        <end position="59"/>
    </location>
</feature>
<feature type="transmembrane region" description="Helical" evidence="1">
    <location>
        <begin position="67"/>
        <end position="87"/>
    </location>
</feature>
<feature type="transmembrane region" description="Helical" evidence="1">
    <location>
        <begin position="107"/>
        <end position="127"/>
    </location>
</feature>
<feature type="transmembrane region" description="Helical" evidence="1">
    <location>
        <begin position="129"/>
        <end position="149"/>
    </location>
</feature>
<feature type="transmembrane region" description="Helical" evidence="1">
    <location>
        <begin position="166"/>
        <end position="186"/>
    </location>
</feature>
<keyword id="KW-1003">Cell membrane</keyword>
<keyword id="KW-0406">Ion transport</keyword>
<keyword id="KW-0464">Manganese</keyword>
<keyword id="KW-0472">Membrane</keyword>
<keyword id="KW-1185">Reference proteome</keyword>
<keyword id="KW-0812">Transmembrane</keyword>
<keyword id="KW-1133">Transmembrane helix</keyword>
<keyword id="KW-0813">Transport</keyword>
<dbReference type="EMBL" id="AP008230">
    <property type="protein sequence ID" value="BAE83000.1"/>
    <property type="molecule type" value="Genomic_DNA"/>
</dbReference>
<dbReference type="STRING" id="138119.DSY1211"/>
<dbReference type="KEGG" id="dsy:DSY1211"/>
<dbReference type="eggNOG" id="COG1971">
    <property type="taxonomic scope" value="Bacteria"/>
</dbReference>
<dbReference type="HOGENOM" id="CLU_096410_3_0_9"/>
<dbReference type="Proteomes" id="UP000001946">
    <property type="component" value="Chromosome"/>
</dbReference>
<dbReference type="GO" id="GO:0005886">
    <property type="term" value="C:plasma membrane"/>
    <property type="evidence" value="ECO:0007669"/>
    <property type="project" value="UniProtKB-SubCell"/>
</dbReference>
<dbReference type="GO" id="GO:0005384">
    <property type="term" value="F:manganese ion transmembrane transporter activity"/>
    <property type="evidence" value="ECO:0007669"/>
    <property type="project" value="UniProtKB-UniRule"/>
</dbReference>
<dbReference type="HAMAP" id="MF_01521">
    <property type="entry name" value="MntP_pump"/>
    <property type="match status" value="1"/>
</dbReference>
<dbReference type="InterPro" id="IPR003810">
    <property type="entry name" value="Mntp/YtaF"/>
</dbReference>
<dbReference type="InterPro" id="IPR022929">
    <property type="entry name" value="Put_MntP"/>
</dbReference>
<dbReference type="PANTHER" id="PTHR35529">
    <property type="entry name" value="MANGANESE EFFLUX PUMP MNTP-RELATED"/>
    <property type="match status" value="1"/>
</dbReference>
<dbReference type="PANTHER" id="PTHR35529:SF1">
    <property type="entry name" value="MANGANESE EFFLUX PUMP MNTP-RELATED"/>
    <property type="match status" value="1"/>
</dbReference>
<dbReference type="Pfam" id="PF02659">
    <property type="entry name" value="Mntp"/>
    <property type="match status" value="1"/>
</dbReference>